<gene>
    <name evidence="1" type="primary">lysS</name>
    <name type="ordered locus">Ppha_1733</name>
</gene>
<evidence type="ECO:0000255" key="1">
    <source>
        <dbReference type="HAMAP-Rule" id="MF_00252"/>
    </source>
</evidence>
<evidence type="ECO:0000256" key="2">
    <source>
        <dbReference type="SAM" id="MobiDB-lite"/>
    </source>
</evidence>
<reference key="1">
    <citation type="submission" date="2008-06" db="EMBL/GenBank/DDBJ databases">
        <title>Complete sequence of Pelodictyon phaeoclathratiforme BU-1.</title>
        <authorList>
            <consortium name="US DOE Joint Genome Institute"/>
            <person name="Lucas S."/>
            <person name="Copeland A."/>
            <person name="Lapidus A."/>
            <person name="Glavina del Rio T."/>
            <person name="Dalin E."/>
            <person name="Tice H."/>
            <person name="Bruce D."/>
            <person name="Goodwin L."/>
            <person name="Pitluck S."/>
            <person name="Schmutz J."/>
            <person name="Larimer F."/>
            <person name="Land M."/>
            <person name="Hauser L."/>
            <person name="Kyrpides N."/>
            <person name="Mikhailova N."/>
            <person name="Liu Z."/>
            <person name="Li T."/>
            <person name="Zhao F."/>
            <person name="Overmann J."/>
            <person name="Bryant D.A."/>
            <person name="Richardson P."/>
        </authorList>
    </citation>
    <scope>NUCLEOTIDE SEQUENCE [LARGE SCALE GENOMIC DNA]</scope>
    <source>
        <strain>DSM 5477 / BU-1</strain>
    </source>
</reference>
<accession>B4SB22</accession>
<dbReference type="EC" id="6.1.1.6" evidence="1"/>
<dbReference type="EMBL" id="CP001110">
    <property type="protein sequence ID" value="ACF43968.1"/>
    <property type="molecule type" value="Genomic_DNA"/>
</dbReference>
<dbReference type="RefSeq" id="WP_012508455.1">
    <property type="nucleotide sequence ID" value="NC_011060.1"/>
</dbReference>
<dbReference type="SMR" id="B4SB22"/>
<dbReference type="STRING" id="324925.Ppha_1733"/>
<dbReference type="KEGG" id="pph:Ppha_1733"/>
<dbReference type="eggNOG" id="COG1190">
    <property type="taxonomic scope" value="Bacteria"/>
</dbReference>
<dbReference type="HOGENOM" id="CLU_008255_6_2_10"/>
<dbReference type="OrthoDB" id="9801152at2"/>
<dbReference type="Proteomes" id="UP000002724">
    <property type="component" value="Chromosome"/>
</dbReference>
<dbReference type="GO" id="GO:0005829">
    <property type="term" value="C:cytosol"/>
    <property type="evidence" value="ECO:0007669"/>
    <property type="project" value="TreeGrafter"/>
</dbReference>
<dbReference type="GO" id="GO:0005524">
    <property type="term" value="F:ATP binding"/>
    <property type="evidence" value="ECO:0007669"/>
    <property type="project" value="UniProtKB-UniRule"/>
</dbReference>
<dbReference type="GO" id="GO:0004824">
    <property type="term" value="F:lysine-tRNA ligase activity"/>
    <property type="evidence" value="ECO:0007669"/>
    <property type="project" value="UniProtKB-UniRule"/>
</dbReference>
<dbReference type="GO" id="GO:0000287">
    <property type="term" value="F:magnesium ion binding"/>
    <property type="evidence" value="ECO:0007669"/>
    <property type="project" value="UniProtKB-UniRule"/>
</dbReference>
<dbReference type="GO" id="GO:0000049">
    <property type="term" value="F:tRNA binding"/>
    <property type="evidence" value="ECO:0007669"/>
    <property type="project" value="TreeGrafter"/>
</dbReference>
<dbReference type="GO" id="GO:0006430">
    <property type="term" value="P:lysyl-tRNA aminoacylation"/>
    <property type="evidence" value="ECO:0007669"/>
    <property type="project" value="UniProtKB-UniRule"/>
</dbReference>
<dbReference type="CDD" id="cd00775">
    <property type="entry name" value="LysRS_core"/>
    <property type="match status" value="1"/>
</dbReference>
<dbReference type="CDD" id="cd04322">
    <property type="entry name" value="LysRS_N"/>
    <property type="match status" value="1"/>
</dbReference>
<dbReference type="FunFam" id="2.40.50.140:FF:000024">
    <property type="entry name" value="Lysine--tRNA ligase"/>
    <property type="match status" value="1"/>
</dbReference>
<dbReference type="Gene3D" id="3.30.930.10">
    <property type="entry name" value="Bira Bifunctional Protein, Domain 2"/>
    <property type="match status" value="1"/>
</dbReference>
<dbReference type="Gene3D" id="2.40.50.140">
    <property type="entry name" value="Nucleic acid-binding proteins"/>
    <property type="match status" value="1"/>
</dbReference>
<dbReference type="HAMAP" id="MF_00252">
    <property type="entry name" value="Lys_tRNA_synth_class2"/>
    <property type="match status" value="1"/>
</dbReference>
<dbReference type="InterPro" id="IPR004364">
    <property type="entry name" value="Aa-tRNA-synt_II"/>
</dbReference>
<dbReference type="InterPro" id="IPR006195">
    <property type="entry name" value="aa-tRNA-synth_II"/>
</dbReference>
<dbReference type="InterPro" id="IPR045864">
    <property type="entry name" value="aa-tRNA-synth_II/BPL/LPL"/>
</dbReference>
<dbReference type="InterPro" id="IPR002313">
    <property type="entry name" value="Lys-tRNA-ligase_II"/>
</dbReference>
<dbReference type="InterPro" id="IPR044136">
    <property type="entry name" value="Lys-tRNA-ligase_II_N"/>
</dbReference>
<dbReference type="InterPro" id="IPR018149">
    <property type="entry name" value="Lys-tRNA-synth_II_C"/>
</dbReference>
<dbReference type="InterPro" id="IPR012340">
    <property type="entry name" value="NA-bd_OB-fold"/>
</dbReference>
<dbReference type="InterPro" id="IPR004365">
    <property type="entry name" value="NA-bd_OB_tRNA"/>
</dbReference>
<dbReference type="NCBIfam" id="TIGR00499">
    <property type="entry name" value="lysS_bact"/>
    <property type="match status" value="1"/>
</dbReference>
<dbReference type="NCBIfam" id="NF001756">
    <property type="entry name" value="PRK00484.1"/>
    <property type="match status" value="1"/>
</dbReference>
<dbReference type="PANTHER" id="PTHR42918:SF15">
    <property type="entry name" value="LYSINE--TRNA LIGASE, CHLOROPLASTIC_MITOCHONDRIAL"/>
    <property type="match status" value="1"/>
</dbReference>
<dbReference type="PANTHER" id="PTHR42918">
    <property type="entry name" value="LYSYL-TRNA SYNTHETASE"/>
    <property type="match status" value="1"/>
</dbReference>
<dbReference type="Pfam" id="PF00152">
    <property type="entry name" value="tRNA-synt_2"/>
    <property type="match status" value="1"/>
</dbReference>
<dbReference type="Pfam" id="PF01336">
    <property type="entry name" value="tRNA_anti-codon"/>
    <property type="match status" value="1"/>
</dbReference>
<dbReference type="PRINTS" id="PR00982">
    <property type="entry name" value="TRNASYNTHLYS"/>
</dbReference>
<dbReference type="SUPFAM" id="SSF55681">
    <property type="entry name" value="Class II aaRS and biotin synthetases"/>
    <property type="match status" value="1"/>
</dbReference>
<dbReference type="SUPFAM" id="SSF50249">
    <property type="entry name" value="Nucleic acid-binding proteins"/>
    <property type="match status" value="1"/>
</dbReference>
<dbReference type="PROSITE" id="PS50862">
    <property type="entry name" value="AA_TRNA_LIGASE_II"/>
    <property type="match status" value="1"/>
</dbReference>
<keyword id="KW-0030">Aminoacyl-tRNA synthetase</keyword>
<keyword id="KW-0067">ATP-binding</keyword>
<keyword id="KW-0963">Cytoplasm</keyword>
<keyword id="KW-0436">Ligase</keyword>
<keyword id="KW-0460">Magnesium</keyword>
<keyword id="KW-0479">Metal-binding</keyword>
<keyword id="KW-0547">Nucleotide-binding</keyword>
<keyword id="KW-0648">Protein biosynthesis</keyword>
<keyword id="KW-1185">Reference proteome</keyword>
<sequence>MHTEKDPNKNTPEQQTPISLNDQMQRRLEERQQLMEAGVNPYPTHFEVTHSSGEIIANFVEEAKTPVSVAGRIMTIRKMGKASFFHLQDSAGRIQIYMKKDEVGDATYDTFKLLDIGDIIGIKGFTFKTRTGEISVHAESLELLTKSLRPIPVAKEKEVDGEKVVFDAFSDKELRYRQRYVDLIVNPEVKETFIKRSAIVSFMRNAFTGKGWLEVETPILQPIYGGAAARPFTTHHNALDMQLYLRIANELYLKRLIVGGFDGVFEFAKDFRNEGIDRFHNPEFTQVELYVAYKDYNWMMEMVEELFSQTALAVNKSEVTTFLGNEISLKPPFRRLSIIDAITEYTGQNIAGQSEEQLRYTAKDLGLELDPKISSGKIIDEIFGEFVEPKLIQPTFIIDYPTEMSPLAKEHPSQPGIVERFELIIGGKEVCNSFSELNDPVIQRERLESQAKLRQRGDEEAMIVDEDFLRAIEYGMPPCAGIGIGIDRLVMILTGQDSIREVIFFPHLKPE</sequence>
<protein>
    <recommendedName>
        <fullName evidence="1">Lysine--tRNA ligase</fullName>
        <ecNumber evidence="1">6.1.1.6</ecNumber>
    </recommendedName>
    <alternativeName>
        <fullName evidence="1">Lysyl-tRNA synthetase</fullName>
        <shortName evidence="1">LysRS</shortName>
    </alternativeName>
</protein>
<comment type="catalytic activity">
    <reaction evidence="1">
        <text>tRNA(Lys) + L-lysine + ATP = L-lysyl-tRNA(Lys) + AMP + diphosphate</text>
        <dbReference type="Rhea" id="RHEA:20792"/>
        <dbReference type="Rhea" id="RHEA-COMP:9696"/>
        <dbReference type="Rhea" id="RHEA-COMP:9697"/>
        <dbReference type="ChEBI" id="CHEBI:30616"/>
        <dbReference type="ChEBI" id="CHEBI:32551"/>
        <dbReference type="ChEBI" id="CHEBI:33019"/>
        <dbReference type="ChEBI" id="CHEBI:78442"/>
        <dbReference type="ChEBI" id="CHEBI:78529"/>
        <dbReference type="ChEBI" id="CHEBI:456215"/>
        <dbReference type="EC" id="6.1.1.6"/>
    </reaction>
</comment>
<comment type="cofactor">
    <cofactor evidence="1">
        <name>Mg(2+)</name>
        <dbReference type="ChEBI" id="CHEBI:18420"/>
    </cofactor>
    <text evidence="1">Binds 3 Mg(2+) ions per subunit.</text>
</comment>
<comment type="subunit">
    <text evidence="1">Homodimer.</text>
</comment>
<comment type="subcellular location">
    <subcellularLocation>
        <location evidence="1">Cytoplasm</location>
    </subcellularLocation>
</comment>
<comment type="similarity">
    <text evidence="1">Belongs to the class-II aminoacyl-tRNA synthetase family.</text>
</comment>
<proteinExistence type="inferred from homology"/>
<organism>
    <name type="scientific">Pelodictyon phaeoclathratiforme (strain DSM 5477 / BU-1)</name>
    <dbReference type="NCBI Taxonomy" id="324925"/>
    <lineage>
        <taxon>Bacteria</taxon>
        <taxon>Pseudomonadati</taxon>
        <taxon>Chlorobiota</taxon>
        <taxon>Chlorobiia</taxon>
        <taxon>Chlorobiales</taxon>
        <taxon>Chlorobiaceae</taxon>
        <taxon>Chlorobium/Pelodictyon group</taxon>
        <taxon>Pelodictyon</taxon>
    </lineage>
</organism>
<feature type="chain" id="PRO_1000101131" description="Lysine--tRNA ligase">
    <location>
        <begin position="1"/>
        <end position="511"/>
    </location>
</feature>
<feature type="region of interest" description="Disordered" evidence="2">
    <location>
        <begin position="1"/>
        <end position="21"/>
    </location>
</feature>
<feature type="compositionally biased region" description="Polar residues" evidence="2">
    <location>
        <begin position="9"/>
        <end position="21"/>
    </location>
</feature>
<feature type="binding site" evidence="1">
    <location>
        <position position="422"/>
    </location>
    <ligand>
        <name>Mg(2+)</name>
        <dbReference type="ChEBI" id="CHEBI:18420"/>
        <label>1</label>
    </ligand>
</feature>
<feature type="binding site" evidence="1">
    <location>
        <position position="429"/>
    </location>
    <ligand>
        <name>Mg(2+)</name>
        <dbReference type="ChEBI" id="CHEBI:18420"/>
        <label>1</label>
    </ligand>
</feature>
<feature type="binding site" evidence="1">
    <location>
        <position position="429"/>
    </location>
    <ligand>
        <name>Mg(2+)</name>
        <dbReference type="ChEBI" id="CHEBI:18420"/>
        <label>2</label>
    </ligand>
</feature>
<name>SYK_PELPB</name>